<feature type="chain" id="PRO_0000091856" description="Forkhead box protein J3">
    <location>
        <begin position="1"/>
        <end position="623"/>
    </location>
</feature>
<feature type="DNA-binding region" description="Fork-head" evidence="2">
    <location>
        <begin position="78"/>
        <end position="173"/>
    </location>
</feature>
<feature type="region of interest" description="Disordered" evidence="3">
    <location>
        <begin position="143"/>
        <end position="178"/>
    </location>
</feature>
<feature type="region of interest" description="Disordered" evidence="3">
    <location>
        <begin position="248"/>
        <end position="275"/>
    </location>
</feature>
<feature type="region of interest" description="Disordered" evidence="3">
    <location>
        <begin position="316"/>
        <end position="451"/>
    </location>
</feature>
<feature type="compositionally biased region" description="Low complexity" evidence="3">
    <location>
        <begin position="263"/>
        <end position="274"/>
    </location>
</feature>
<feature type="compositionally biased region" description="Low complexity" evidence="3">
    <location>
        <begin position="317"/>
        <end position="346"/>
    </location>
</feature>
<feature type="compositionally biased region" description="Polar residues" evidence="3">
    <location>
        <begin position="347"/>
        <end position="371"/>
    </location>
</feature>
<feature type="compositionally biased region" description="Low complexity" evidence="3">
    <location>
        <begin position="405"/>
        <end position="415"/>
    </location>
</feature>
<feature type="modified residue" description="Phosphoserine" evidence="9">
    <location>
        <position position="223"/>
    </location>
</feature>
<feature type="modified residue" description="Phosphoserine" evidence="1">
    <location>
        <position position="297"/>
    </location>
</feature>
<feature type="modified residue" description="Phosphoserine" evidence="1">
    <location>
        <position position="490"/>
    </location>
</feature>
<feature type="splice variant" id="VSP_010368" description="In isoform 2." evidence="7">
    <location>
        <begin position="177"/>
        <end position="210"/>
    </location>
</feature>
<sequence>MGLYGQACPSVTSLRMTSELESSLTSMDWLPQLTMRAAIQKSDATQNAHGTGISKKNALLDPNTTLDQEEVQQHKDGKPPYSYASLITFAINSSPKKKMTLSEIYQWICDNFPYYREAGSGWKNSIRHNLSLNKCFLKVPRSKDDPGKGSYWAIDTNPKEDTLPTRPKKRARSVERASTPYSIDSDSLGMECIISGSASPTLAINTVTNKVTLYNADQDGSDSPRSSLNNSLSDQSLASVNLNSVGSVHSYTPVTNHPEPVSQPLTPQQQQQPQYNLPEREKQLLFTEYNFEDLSASFRSLYKSVFEQSLSQQGLMSIPSESSQQSHTSCSYQHSPSSTVTSHPHSNQSSLPNNHSGLSATGSNSVAQVSLSHPQMHPQPSPHTPHRPHGLPQHPQRPQHPAPHPQQHSQLQPPHSQHPPPHQHIQHHPNHQHQTLAHQPPPPPQQVSCNSGVSSDWYATLDMLKESCRIASSVNWSDVDLSQFQGLMESMRQADLKNWSLDQVQFADLCSSLNQFFTQTGLIHSQSNVPQNVCHGAMHPAKPSQHIGAGNLYIDSRQSLPPSVMPPPGYPHIPQALNTPGTTMAGHHGAMNQQHMMPSQAFPMRRPLPPDDIQDDFDWDSIV</sequence>
<organism>
    <name type="scientific">Mus musculus</name>
    <name type="common">Mouse</name>
    <dbReference type="NCBI Taxonomy" id="10090"/>
    <lineage>
        <taxon>Eukaryota</taxon>
        <taxon>Metazoa</taxon>
        <taxon>Chordata</taxon>
        <taxon>Craniata</taxon>
        <taxon>Vertebrata</taxon>
        <taxon>Euteleostomi</taxon>
        <taxon>Mammalia</taxon>
        <taxon>Eutheria</taxon>
        <taxon>Euarchontoglires</taxon>
        <taxon>Glires</taxon>
        <taxon>Rodentia</taxon>
        <taxon>Myomorpha</taxon>
        <taxon>Muroidea</taxon>
        <taxon>Muridae</taxon>
        <taxon>Murinae</taxon>
        <taxon>Mus</taxon>
        <taxon>Mus</taxon>
    </lineage>
</organism>
<evidence type="ECO:0000250" key="1">
    <source>
        <dbReference type="UniProtKB" id="Q9UPW0"/>
    </source>
</evidence>
<evidence type="ECO:0000255" key="2">
    <source>
        <dbReference type="PROSITE-ProRule" id="PRU00089"/>
    </source>
</evidence>
<evidence type="ECO:0000256" key="3">
    <source>
        <dbReference type="SAM" id="MobiDB-lite"/>
    </source>
</evidence>
<evidence type="ECO:0000269" key="4">
    <source>
    </source>
</evidence>
<evidence type="ECO:0000269" key="5">
    <source>
    </source>
</evidence>
<evidence type="ECO:0000269" key="6">
    <source>
    </source>
</evidence>
<evidence type="ECO:0000303" key="7">
    <source>
    </source>
</evidence>
<evidence type="ECO:0000305" key="8"/>
<evidence type="ECO:0007744" key="9">
    <source>
    </source>
</evidence>
<accession>Q8BUR3</accession>
<accession>A2AA37</accession>
<accession>A2AA38</accession>
<accession>Q3UTD8</accession>
<reference key="1">
    <citation type="journal article" date="2005" name="Science">
        <title>The transcriptional landscape of the mammalian genome.</title>
        <authorList>
            <person name="Carninci P."/>
            <person name="Kasukawa T."/>
            <person name="Katayama S."/>
            <person name="Gough J."/>
            <person name="Frith M.C."/>
            <person name="Maeda N."/>
            <person name="Oyama R."/>
            <person name="Ravasi T."/>
            <person name="Lenhard B."/>
            <person name="Wells C."/>
            <person name="Kodzius R."/>
            <person name="Shimokawa K."/>
            <person name="Bajic V.B."/>
            <person name="Brenner S.E."/>
            <person name="Batalov S."/>
            <person name="Forrest A.R."/>
            <person name="Zavolan M."/>
            <person name="Davis M.J."/>
            <person name="Wilming L.G."/>
            <person name="Aidinis V."/>
            <person name="Allen J.E."/>
            <person name="Ambesi-Impiombato A."/>
            <person name="Apweiler R."/>
            <person name="Aturaliya R.N."/>
            <person name="Bailey T.L."/>
            <person name="Bansal M."/>
            <person name="Baxter L."/>
            <person name="Beisel K.W."/>
            <person name="Bersano T."/>
            <person name="Bono H."/>
            <person name="Chalk A.M."/>
            <person name="Chiu K.P."/>
            <person name="Choudhary V."/>
            <person name="Christoffels A."/>
            <person name="Clutterbuck D.R."/>
            <person name="Crowe M.L."/>
            <person name="Dalla E."/>
            <person name="Dalrymple B.P."/>
            <person name="de Bono B."/>
            <person name="Della Gatta G."/>
            <person name="di Bernardo D."/>
            <person name="Down T."/>
            <person name="Engstrom P."/>
            <person name="Fagiolini M."/>
            <person name="Faulkner G."/>
            <person name="Fletcher C.F."/>
            <person name="Fukushima T."/>
            <person name="Furuno M."/>
            <person name="Futaki S."/>
            <person name="Gariboldi M."/>
            <person name="Georgii-Hemming P."/>
            <person name="Gingeras T.R."/>
            <person name="Gojobori T."/>
            <person name="Green R.E."/>
            <person name="Gustincich S."/>
            <person name="Harbers M."/>
            <person name="Hayashi Y."/>
            <person name="Hensch T.K."/>
            <person name="Hirokawa N."/>
            <person name="Hill D."/>
            <person name="Huminiecki L."/>
            <person name="Iacono M."/>
            <person name="Ikeo K."/>
            <person name="Iwama A."/>
            <person name="Ishikawa T."/>
            <person name="Jakt M."/>
            <person name="Kanapin A."/>
            <person name="Katoh M."/>
            <person name="Kawasawa Y."/>
            <person name="Kelso J."/>
            <person name="Kitamura H."/>
            <person name="Kitano H."/>
            <person name="Kollias G."/>
            <person name="Krishnan S.P."/>
            <person name="Kruger A."/>
            <person name="Kummerfeld S.K."/>
            <person name="Kurochkin I.V."/>
            <person name="Lareau L.F."/>
            <person name="Lazarevic D."/>
            <person name="Lipovich L."/>
            <person name="Liu J."/>
            <person name="Liuni S."/>
            <person name="McWilliam S."/>
            <person name="Madan Babu M."/>
            <person name="Madera M."/>
            <person name="Marchionni L."/>
            <person name="Matsuda H."/>
            <person name="Matsuzawa S."/>
            <person name="Miki H."/>
            <person name="Mignone F."/>
            <person name="Miyake S."/>
            <person name="Morris K."/>
            <person name="Mottagui-Tabar S."/>
            <person name="Mulder N."/>
            <person name="Nakano N."/>
            <person name="Nakauchi H."/>
            <person name="Ng P."/>
            <person name="Nilsson R."/>
            <person name="Nishiguchi S."/>
            <person name="Nishikawa S."/>
            <person name="Nori F."/>
            <person name="Ohara O."/>
            <person name="Okazaki Y."/>
            <person name="Orlando V."/>
            <person name="Pang K.C."/>
            <person name="Pavan W.J."/>
            <person name="Pavesi G."/>
            <person name="Pesole G."/>
            <person name="Petrovsky N."/>
            <person name="Piazza S."/>
            <person name="Reed J."/>
            <person name="Reid J.F."/>
            <person name="Ring B.Z."/>
            <person name="Ringwald M."/>
            <person name="Rost B."/>
            <person name="Ruan Y."/>
            <person name="Salzberg S.L."/>
            <person name="Sandelin A."/>
            <person name="Schneider C."/>
            <person name="Schoenbach C."/>
            <person name="Sekiguchi K."/>
            <person name="Semple C.A."/>
            <person name="Seno S."/>
            <person name="Sessa L."/>
            <person name="Sheng Y."/>
            <person name="Shibata Y."/>
            <person name="Shimada H."/>
            <person name="Shimada K."/>
            <person name="Silva D."/>
            <person name="Sinclair B."/>
            <person name="Sperling S."/>
            <person name="Stupka E."/>
            <person name="Sugiura K."/>
            <person name="Sultana R."/>
            <person name="Takenaka Y."/>
            <person name="Taki K."/>
            <person name="Tammoja K."/>
            <person name="Tan S.L."/>
            <person name="Tang S."/>
            <person name="Taylor M.S."/>
            <person name="Tegner J."/>
            <person name="Teichmann S.A."/>
            <person name="Ueda H.R."/>
            <person name="van Nimwegen E."/>
            <person name="Verardo R."/>
            <person name="Wei C.L."/>
            <person name="Yagi K."/>
            <person name="Yamanishi H."/>
            <person name="Zabarovsky E."/>
            <person name="Zhu S."/>
            <person name="Zimmer A."/>
            <person name="Hide W."/>
            <person name="Bult C."/>
            <person name="Grimmond S.M."/>
            <person name="Teasdale R.D."/>
            <person name="Liu E.T."/>
            <person name="Brusic V."/>
            <person name="Quackenbush J."/>
            <person name="Wahlestedt C."/>
            <person name="Mattick J.S."/>
            <person name="Hume D.A."/>
            <person name="Kai C."/>
            <person name="Sasaki D."/>
            <person name="Tomaru Y."/>
            <person name="Fukuda S."/>
            <person name="Kanamori-Katayama M."/>
            <person name="Suzuki M."/>
            <person name="Aoki J."/>
            <person name="Arakawa T."/>
            <person name="Iida J."/>
            <person name="Imamura K."/>
            <person name="Itoh M."/>
            <person name="Kato T."/>
            <person name="Kawaji H."/>
            <person name="Kawagashira N."/>
            <person name="Kawashima T."/>
            <person name="Kojima M."/>
            <person name="Kondo S."/>
            <person name="Konno H."/>
            <person name="Nakano K."/>
            <person name="Ninomiya N."/>
            <person name="Nishio T."/>
            <person name="Okada M."/>
            <person name="Plessy C."/>
            <person name="Shibata K."/>
            <person name="Shiraki T."/>
            <person name="Suzuki S."/>
            <person name="Tagami M."/>
            <person name="Waki K."/>
            <person name="Watahiki A."/>
            <person name="Okamura-Oho Y."/>
            <person name="Suzuki H."/>
            <person name="Kawai J."/>
            <person name="Hayashizaki Y."/>
        </authorList>
    </citation>
    <scope>NUCLEOTIDE SEQUENCE [LARGE SCALE MRNA] (ISOFORM 1)</scope>
    <source>
        <strain>C57BL/6J</strain>
        <tissue>Egg</tissue>
    </source>
</reference>
<reference key="2">
    <citation type="journal article" date="2003" name="DNA Res.">
        <title>Prediction of the coding sequences of mouse homologues of KIAA gene: III. The complete nucleotide sequences of 500 mouse KIAA-homologous cDNAs identified by screening of terminal sequences of cDNA clones randomly sampled from size-fractionated libraries.</title>
        <authorList>
            <person name="Okazaki N."/>
            <person name="Kikuno R."/>
            <person name="Ohara R."/>
            <person name="Inamoto S."/>
            <person name="Koseki H."/>
            <person name="Hiraoka S."/>
            <person name="Saga Y."/>
            <person name="Nagase T."/>
            <person name="Ohara O."/>
            <person name="Koga H."/>
        </authorList>
    </citation>
    <scope>NUCLEOTIDE SEQUENCE [LARGE SCALE MRNA] (ISOFORM 2)</scope>
    <source>
        <tissue>Embryonic tail</tissue>
    </source>
</reference>
<reference key="3">
    <citation type="journal article" date="2009" name="PLoS Biol.">
        <title>Lineage-specific biology revealed by a finished genome assembly of the mouse.</title>
        <authorList>
            <person name="Church D.M."/>
            <person name="Goodstadt L."/>
            <person name="Hillier L.W."/>
            <person name="Zody M.C."/>
            <person name="Goldstein S."/>
            <person name="She X."/>
            <person name="Bult C.J."/>
            <person name="Agarwala R."/>
            <person name="Cherry J.L."/>
            <person name="DiCuccio M."/>
            <person name="Hlavina W."/>
            <person name="Kapustin Y."/>
            <person name="Meric P."/>
            <person name="Maglott D."/>
            <person name="Birtle Z."/>
            <person name="Marques A.C."/>
            <person name="Graves T."/>
            <person name="Zhou S."/>
            <person name="Teague B."/>
            <person name="Potamousis K."/>
            <person name="Churas C."/>
            <person name="Place M."/>
            <person name="Herschleb J."/>
            <person name="Runnheim R."/>
            <person name="Forrest D."/>
            <person name="Amos-Landgraf J."/>
            <person name="Schwartz D.C."/>
            <person name="Cheng Z."/>
            <person name="Lindblad-Toh K."/>
            <person name="Eichler E.E."/>
            <person name="Ponting C.P."/>
        </authorList>
    </citation>
    <scope>NUCLEOTIDE SEQUENCE [LARGE SCALE GENOMIC DNA]</scope>
    <source>
        <strain>C57BL/6J</strain>
    </source>
</reference>
<reference key="4">
    <citation type="journal article" date="2004" name="Genome Res.">
        <title>The status, quality, and expansion of the NIH full-length cDNA project: the Mammalian Gene Collection (MGC).</title>
        <authorList>
            <consortium name="The MGC Project Team"/>
        </authorList>
    </citation>
    <scope>NUCLEOTIDE SEQUENCE [LARGE SCALE MRNA] (ISOFORM 1)</scope>
    <source>
        <tissue>Olfactory epithelium</tissue>
    </source>
</reference>
<reference key="5">
    <citation type="journal article" date="2010" name="Cell">
        <title>A tissue-specific atlas of mouse protein phosphorylation and expression.</title>
        <authorList>
            <person name="Huttlin E.L."/>
            <person name="Jedrychowski M.P."/>
            <person name="Elias J.E."/>
            <person name="Goswami T."/>
            <person name="Rad R."/>
            <person name="Beausoleil S.A."/>
            <person name="Villen J."/>
            <person name="Haas W."/>
            <person name="Sowa M.E."/>
            <person name="Gygi S.P."/>
        </authorList>
    </citation>
    <scope>PHOSPHORYLATION [LARGE SCALE ANALYSIS] AT SER-223</scope>
    <scope>IDENTIFICATION BY MASS SPECTROMETRY [LARGE SCALE ANALYSIS]</scope>
    <source>
        <tissue>Brain</tissue>
        <tissue>Heart</tissue>
        <tissue>Kidney</tissue>
        <tissue>Lung</tissue>
        <tissue>Spleen</tissue>
        <tissue>Testis</tissue>
    </source>
</reference>
<reference key="6">
    <citation type="journal article" date="2010" name="Dev. Biol.">
        <title>Foxj3 transcriptionally activates Mef2c and regulates adult skeletal muscle fiber type identity.</title>
        <authorList>
            <person name="Alexander M.S."/>
            <person name="Shi X."/>
            <person name="Voelker K.A."/>
            <person name="Grange R.W."/>
            <person name="Garcia J.A."/>
            <person name="Hammer R.E."/>
            <person name="Garry D.J."/>
        </authorList>
    </citation>
    <scope>FUNCTION</scope>
    <scope>DISRUPTION PHENOTYPE</scope>
</reference>
<reference key="7">
    <citation type="journal article" date="2012" name="Am. J. Physiol.">
        <title>MicroRNA-494 regulates mitochondrial biogenesis in skeletal muscle through mitochondrial transcription factor A and Forkhead box j3.</title>
        <authorList>
            <person name="Yamamoto H."/>
            <person name="Morino K."/>
            <person name="Nishio Y."/>
            <person name="Ugi S."/>
            <person name="Yoshizaki T."/>
            <person name="Kashiwagi A."/>
            <person name="Maegawa H."/>
        </authorList>
    </citation>
    <scope>INDUCTION</scope>
</reference>
<reference key="8">
    <citation type="journal article" date="2016" name="Mol. Reprod. Dev.">
        <title>Multiple roles of FOXJ3 in spermatogenesis: A lesson from Foxj3 conditional knockout mouse models.</title>
        <authorList>
            <person name="Ni L."/>
            <person name="Xie H."/>
            <person name="Tan L."/>
        </authorList>
    </citation>
    <scope>FUNCTION</scope>
    <scope>DISRUPTION PHENOTYPE</scope>
    <scope>TISSUE SPECIFICITY</scope>
    <scope>DEVELOPMENTAL STAGE</scope>
</reference>
<dbReference type="EMBL" id="AK082840">
    <property type="protein sequence ID" value="BAC38648.1"/>
    <property type="molecule type" value="mRNA"/>
</dbReference>
<dbReference type="EMBL" id="AK129271">
    <property type="protein sequence ID" value="BAC98081.1"/>
    <property type="status" value="ALT_INIT"/>
    <property type="molecule type" value="mRNA"/>
</dbReference>
<dbReference type="EMBL" id="AK139508">
    <property type="protein sequence ID" value="BAE24042.1"/>
    <property type="molecule type" value="mRNA"/>
</dbReference>
<dbReference type="EMBL" id="AL645563">
    <property type="status" value="NOT_ANNOTATED_CDS"/>
    <property type="molecule type" value="Genomic_DNA"/>
</dbReference>
<dbReference type="EMBL" id="BC058231">
    <property type="protein sequence ID" value="AAH58231.1"/>
    <property type="molecule type" value="mRNA"/>
</dbReference>
<dbReference type="CCDS" id="CCDS18585.1">
    <molecule id="Q8BUR3-1"/>
</dbReference>
<dbReference type="CCDS" id="CCDS71462.1">
    <molecule id="Q8BUR3-2"/>
</dbReference>
<dbReference type="RefSeq" id="NP_001277625.1">
    <molecule id="Q8BUR3-2"/>
    <property type="nucleotide sequence ID" value="NM_001290696.1"/>
</dbReference>
<dbReference type="RefSeq" id="NP_001344106.1">
    <molecule id="Q8BUR3-1"/>
    <property type="nucleotide sequence ID" value="NM_001357177.1"/>
</dbReference>
<dbReference type="RefSeq" id="NP_766287.1">
    <molecule id="Q8BUR3-1"/>
    <property type="nucleotide sequence ID" value="NM_172699.3"/>
</dbReference>
<dbReference type="RefSeq" id="XP_006503080.1">
    <molecule id="Q8BUR3-1"/>
    <property type="nucleotide sequence ID" value="XM_006503017.5"/>
</dbReference>
<dbReference type="RefSeq" id="XP_011238799.1">
    <property type="nucleotide sequence ID" value="XM_011240497.2"/>
</dbReference>
<dbReference type="RefSeq" id="XP_017175639.1">
    <property type="nucleotide sequence ID" value="XM_017320150.1"/>
</dbReference>
<dbReference type="RefSeq" id="XP_036019931.1">
    <molecule id="Q8BUR3-2"/>
    <property type="nucleotide sequence ID" value="XM_036164038.1"/>
</dbReference>
<dbReference type="RefSeq" id="XP_036019932.1">
    <molecule id="Q8BUR3-2"/>
    <property type="nucleotide sequence ID" value="XM_036164039.1"/>
</dbReference>
<dbReference type="SMR" id="Q8BUR3"/>
<dbReference type="BioGRID" id="231003">
    <property type="interactions" value="1"/>
</dbReference>
<dbReference type="FunCoup" id="Q8BUR3">
    <property type="interactions" value="3154"/>
</dbReference>
<dbReference type="STRING" id="10090.ENSMUSP00000035746"/>
<dbReference type="iPTMnet" id="Q8BUR3"/>
<dbReference type="PhosphoSitePlus" id="Q8BUR3"/>
<dbReference type="jPOST" id="Q8BUR3"/>
<dbReference type="PaxDb" id="10090-ENSMUSP00000035746"/>
<dbReference type="ProteomicsDB" id="271794">
    <molecule id="Q8BUR3-1"/>
</dbReference>
<dbReference type="ProteomicsDB" id="271795">
    <molecule id="Q8BUR3-2"/>
</dbReference>
<dbReference type="Pumba" id="Q8BUR3"/>
<dbReference type="Antibodypedia" id="32193">
    <property type="antibodies" value="187 antibodies from 27 providers"/>
</dbReference>
<dbReference type="DNASU" id="230700"/>
<dbReference type="Ensembl" id="ENSMUST00000044564.15">
    <molecule id="Q8BUR3-1"/>
    <property type="protein sequence ID" value="ENSMUSP00000035746.9"/>
    <property type="gene ID" value="ENSMUSG00000032998.17"/>
</dbReference>
<dbReference type="Ensembl" id="ENSMUST00000106310.9">
    <molecule id="Q8BUR3-2"/>
    <property type="protein sequence ID" value="ENSMUSP00000101917.3"/>
    <property type="gene ID" value="ENSMUSG00000032998.17"/>
</dbReference>
<dbReference type="GeneID" id="230700"/>
<dbReference type="KEGG" id="mmu:230700"/>
<dbReference type="UCSC" id="uc008umt.2">
    <molecule id="Q8BUR3-1"/>
    <property type="organism name" value="mouse"/>
</dbReference>
<dbReference type="UCSC" id="uc008umu.2">
    <molecule id="Q8BUR3-2"/>
    <property type="organism name" value="mouse"/>
</dbReference>
<dbReference type="AGR" id="MGI:2443432"/>
<dbReference type="CTD" id="22887"/>
<dbReference type="MGI" id="MGI:2443432">
    <property type="gene designation" value="Foxj3"/>
</dbReference>
<dbReference type="VEuPathDB" id="HostDB:ENSMUSG00000032998"/>
<dbReference type="eggNOG" id="KOG2294">
    <property type="taxonomic scope" value="Eukaryota"/>
</dbReference>
<dbReference type="GeneTree" id="ENSGT00940000160362"/>
<dbReference type="HOGENOM" id="CLU_030503_0_0_1"/>
<dbReference type="InParanoid" id="Q8BUR3"/>
<dbReference type="OMA" id="HMACNIG"/>
<dbReference type="OrthoDB" id="10029558at2759"/>
<dbReference type="PhylomeDB" id="Q8BUR3"/>
<dbReference type="TreeFam" id="TF333250"/>
<dbReference type="BioGRID-ORCS" id="230700">
    <property type="hits" value="3 hits in 79 CRISPR screens"/>
</dbReference>
<dbReference type="ChiTaRS" id="Foxj3">
    <property type="organism name" value="mouse"/>
</dbReference>
<dbReference type="PRO" id="PR:Q8BUR3"/>
<dbReference type="Proteomes" id="UP000000589">
    <property type="component" value="Chromosome 4"/>
</dbReference>
<dbReference type="RNAct" id="Q8BUR3">
    <property type="molecule type" value="protein"/>
</dbReference>
<dbReference type="Bgee" id="ENSMUSG00000032998">
    <property type="expression patterns" value="Expressed in animal zygote and 274 other cell types or tissues"/>
</dbReference>
<dbReference type="ExpressionAtlas" id="Q8BUR3">
    <property type="expression patterns" value="baseline and differential"/>
</dbReference>
<dbReference type="GO" id="GO:0005634">
    <property type="term" value="C:nucleus"/>
    <property type="evidence" value="ECO:0007669"/>
    <property type="project" value="UniProtKB-SubCell"/>
</dbReference>
<dbReference type="GO" id="GO:0001228">
    <property type="term" value="F:DNA-binding transcription activator activity, RNA polymerase II-specific"/>
    <property type="evidence" value="ECO:0007669"/>
    <property type="project" value="Ensembl"/>
</dbReference>
<dbReference type="GO" id="GO:1990837">
    <property type="term" value="F:sequence-specific double-stranded DNA binding"/>
    <property type="evidence" value="ECO:0007669"/>
    <property type="project" value="Ensembl"/>
</dbReference>
<dbReference type="GO" id="GO:0030154">
    <property type="term" value="P:cell differentiation"/>
    <property type="evidence" value="ECO:0007669"/>
    <property type="project" value="UniProtKB-KW"/>
</dbReference>
<dbReference type="GO" id="GO:0007141">
    <property type="term" value="P:male meiosis I"/>
    <property type="evidence" value="ECO:0000315"/>
    <property type="project" value="UniProtKB"/>
</dbReference>
<dbReference type="GO" id="GO:0007283">
    <property type="term" value="P:spermatogenesis"/>
    <property type="evidence" value="ECO:0000315"/>
    <property type="project" value="UniProtKB"/>
</dbReference>
<dbReference type="CDD" id="cd20024">
    <property type="entry name" value="FH_FOXJ2-like"/>
    <property type="match status" value="1"/>
</dbReference>
<dbReference type="FunFam" id="1.10.10.10:FF:000088">
    <property type="entry name" value="Forkhead box protein J3"/>
    <property type="match status" value="1"/>
</dbReference>
<dbReference type="Gene3D" id="1.10.10.10">
    <property type="entry name" value="Winged helix-like DNA-binding domain superfamily/Winged helix DNA-binding domain"/>
    <property type="match status" value="1"/>
</dbReference>
<dbReference type="InterPro" id="IPR001766">
    <property type="entry name" value="Fork_head_dom"/>
</dbReference>
<dbReference type="InterPro" id="IPR045912">
    <property type="entry name" value="FOXJ2/3-like"/>
</dbReference>
<dbReference type="InterPro" id="IPR018122">
    <property type="entry name" value="TF_fork_head_CS_1"/>
</dbReference>
<dbReference type="InterPro" id="IPR030456">
    <property type="entry name" value="TF_fork_head_CS_2"/>
</dbReference>
<dbReference type="InterPro" id="IPR036388">
    <property type="entry name" value="WH-like_DNA-bd_sf"/>
</dbReference>
<dbReference type="InterPro" id="IPR036390">
    <property type="entry name" value="WH_DNA-bd_sf"/>
</dbReference>
<dbReference type="PANTHER" id="PTHR46078">
    <property type="entry name" value="FORKHEAD BOX PROTEIN J2 FAMILY MEMBER"/>
    <property type="match status" value="1"/>
</dbReference>
<dbReference type="PANTHER" id="PTHR46078:SF3">
    <property type="entry name" value="FORKHEAD BOX PROTEIN J3"/>
    <property type="match status" value="1"/>
</dbReference>
<dbReference type="Pfam" id="PF00250">
    <property type="entry name" value="Forkhead"/>
    <property type="match status" value="1"/>
</dbReference>
<dbReference type="PRINTS" id="PR00053">
    <property type="entry name" value="FORKHEAD"/>
</dbReference>
<dbReference type="SMART" id="SM00339">
    <property type="entry name" value="FH"/>
    <property type="match status" value="1"/>
</dbReference>
<dbReference type="SUPFAM" id="SSF46785">
    <property type="entry name" value="Winged helix' DNA-binding domain"/>
    <property type="match status" value="1"/>
</dbReference>
<dbReference type="PROSITE" id="PS00657">
    <property type="entry name" value="FORK_HEAD_1"/>
    <property type="match status" value="1"/>
</dbReference>
<dbReference type="PROSITE" id="PS00658">
    <property type="entry name" value="FORK_HEAD_2"/>
    <property type="match status" value="1"/>
</dbReference>
<dbReference type="PROSITE" id="PS50039">
    <property type="entry name" value="FORK_HEAD_3"/>
    <property type="match status" value="1"/>
</dbReference>
<name>FOXJ3_MOUSE</name>
<keyword id="KW-0025">Alternative splicing</keyword>
<keyword id="KW-0221">Differentiation</keyword>
<keyword id="KW-0238">DNA-binding</keyword>
<keyword id="KW-0469">Meiosis</keyword>
<keyword id="KW-0539">Nucleus</keyword>
<keyword id="KW-0597">Phosphoprotein</keyword>
<keyword id="KW-1185">Reference proteome</keyword>
<keyword id="KW-0744">Spermatogenesis</keyword>
<keyword id="KW-0804">Transcription</keyword>
<keyword id="KW-0805">Transcription regulation</keyword>
<comment type="function">
    <text evidence="4 6">Transcriptional activator of MEF2C involved in the regulation of adult muscle fiber type identity and skeletal muscle regeneration (PubMed:19914232). Plays an important role in spermatogenesis (PubMed:27739607). Required for the survival of spermatogonia and participates in spermatocyte meiosis (PubMed:27739607).</text>
</comment>
<comment type="subcellular location">
    <subcellularLocation>
        <location evidence="2">Nucleus</location>
    </subcellularLocation>
</comment>
<comment type="alternative products">
    <event type="alternative splicing"/>
    <isoform>
        <id>Q8BUR3-1</id>
        <name>1</name>
        <sequence type="displayed"/>
    </isoform>
    <isoform>
        <id>Q8BUR3-2</id>
        <name>2</name>
        <sequence type="described" ref="VSP_010368"/>
    </isoform>
</comment>
<comment type="tissue specificity">
    <text evidence="6">Highly expressed in spermatogonia, spermatocytes, and round spermatids within the testis (at protein level).</text>
</comment>
<comment type="developmental stage">
    <text evidence="6">Accumulates in the testis starting at postnatal day 3, and remains at a steady level from 1 to 3 weeks in age.</text>
</comment>
<comment type="induction">
    <text evidence="5">Increased markedly during skeletal muscle differentiation (at protein level).</text>
</comment>
<comment type="disruption phenotype">
    <text evidence="4 6">Null mice have an abnormal skeletal muscle fiber type ratio in males as well as defects in muscle regeneration following injury (PubMed:19914232). Male germ-cell-specific conditional knockout results in complete male infertility, early loss of spermatogonia and meiotic arrest in spermatocytes (PubMed:27739607). Spermatocytes show significantly reduced expression meiotic arrest-related genes (PubMed:27739607).</text>
</comment>
<comment type="sequence caution" evidence="8">
    <conflict type="erroneous initiation">
        <sequence resource="EMBL-CDS" id="BAC98081"/>
    </conflict>
</comment>
<gene>
    <name type="primary">Foxj3</name>
    <name type="synonym">Kiaa1041</name>
</gene>
<protein>
    <recommendedName>
        <fullName>Forkhead box protein J3</fullName>
    </recommendedName>
</protein>
<proteinExistence type="evidence at protein level"/>